<dbReference type="EMBL" id="CP001341">
    <property type="protein sequence ID" value="ACL39800.1"/>
    <property type="molecule type" value="Genomic_DNA"/>
</dbReference>
<dbReference type="SMR" id="B8H7M0"/>
<dbReference type="STRING" id="452863.Achl_1824"/>
<dbReference type="KEGG" id="ach:Achl_1824"/>
<dbReference type="eggNOG" id="COG1660">
    <property type="taxonomic scope" value="Bacteria"/>
</dbReference>
<dbReference type="HOGENOM" id="CLU_059558_0_0_11"/>
<dbReference type="OrthoDB" id="9784461at2"/>
<dbReference type="Proteomes" id="UP000002505">
    <property type="component" value="Chromosome"/>
</dbReference>
<dbReference type="GO" id="GO:0005524">
    <property type="term" value="F:ATP binding"/>
    <property type="evidence" value="ECO:0007669"/>
    <property type="project" value="UniProtKB-UniRule"/>
</dbReference>
<dbReference type="GO" id="GO:0005525">
    <property type="term" value="F:GTP binding"/>
    <property type="evidence" value="ECO:0007669"/>
    <property type="project" value="UniProtKB-UniRule"/>
</dbReference>
<dbReference type="Gene3D" id="3.40.50.300">
    <property type="entry name" value="P-loop containing nucleotide triphosphate hydrolases"/>
    <property type="match status" value="1"/>
</dbReference>
<dbReference type="HAMAP" id="MF_00636">
    <property type="entry name" value="RapZ_like"/>
    <property type="match status" value="1"/>
</dbReference>
<dbReference type="InterPro" id="IPR027417">
    <property type="entry name" value="P-loop_NTPase"/>
</dbReference>
<dbReference type="InterPro" id="IPR005337">
    <property type="entry name" value="RapZ-like"/>
</dbReference>
<dbReference type="InterPro" id="IPR053930">
    <property type="entry name" value="RapZ-like_N"/>
</dbReference>
<dbReference type="InterPro" id="IPR053931">
    <property type="entry name" value="RapZ_C"/>
</dbReference>
<dbReference type="NCBIfam" id="NF003828">
    <property type="entry name" value="PRK05416.1"/>
    <property type="match status" value="1"/>
</dbReference>
<dbReference type="PANTHER" id="PTHR30448">
    <property type="entry name" value="RNASE ADAPTER PROTEIN RAPZ"/>
    <property type="match status" value="1"/>
</dbReference>
<dbReference type="PANTHER" id="PTHR30448:SF0">
    <property type="entry name" value="RNASE ADAPTER PROTEIN RAPZ"/>
    <property type="match status" value="1"/>
</dbReference>
<dbReference type="Pfam" id="PF22740">
    <property type="entry name" value="PapZ_C"/>
    <property type="match status" value="1"/>
</dbReference>
<dbReference type="Pfam" id="PF03668">
    <property type="entry name" value="RapZ-like_N"/>
    <property type="match status" value="1"/>
</dbReference>
<dbReference type="PIRSF" id="PIRSF005052">
    <property type="entry name" value="P-loopkin"/>
    <property type="match status" value="1"/>
</dbReference>
<dbReference type="SUPFAM" id="SSF52540">
    <property type="entry name" value="P-loop containing nucleoside triphosphate hydrolases"/>
    <property type="match status" value="1"/>
</dbReference>
<organism>
    <name type="scientific">Pseudarthrobacter chlorophenolicus (strain ATCC 700700 / DSM 12829 / CIP 107037 / JCM 12360 / KCTC 9906 / NCIMB 13794 / A6)</name>
    <name type="common">Arthrobacter chlorophenolicus</name>
    <dbReference type="NCBI Taxonomy" id="452863"/>
    <lineage>
        <taxon>Bacteria</taxon>
        <taxon>Bacillati</taxon>
        <taxon>Actinomycetota</taxon>
        <taxon>Actinomycetes</taxon>
        <taxon>Micrococcales</taxon>
        <taxon>Micrococcaceae</taxon>
        <taxon>Pseudarthrobacter</taxon>
    </lineage>
</organism>
<reference key="1">
    <citation type="submission" date="2009-01" db="EMBL/GenBank/DDBJ databases">
        <title>Complete sequence of chromosome of Arthrobacter chlorophenolicus A6.</title>
        <authorList>
            <consortium name="US DOE Joint Genome Institute"/>
            <person name="Lucas S."/>
            <person name="Copeland A."/>
            <person name="Lapidus A."/>
            <person name="Glavina del Rio T."/>
            <person name="Tice H."/>
            <person name="Bruce D."/>
            <person name="Goodwin L."/>
            <person name="Pitluck S."/>
            <person name="Goltsman E."/>
            <person name="Clum A."/>
            <person name="Larimer F."/>
            <person name="Land M."/>
            <person name="Hauser L."/>
            <person name="Kyrpides N."/>
            <person name="Mikhailova N."/>
            <person name="Jansson J."/>
            <person name="Richardson P."/>
        </authorList>
    </citation>
    <scope>NUCLEOTIDE SEQUENCE [LARGE SCALE GENOMIC DNA]</scope>
    <source>
        <strain>ATCC 700700 / DSM 12829 / CIP 107037 / JCM 12360 / KCTC 9906 / NCIMB 13794 / A6</strain>
    </source>
</reference>
<sequence>MAGTSAESEAGQDGMEPVKPLEAELLVVTGMSGAGRSTAADALEDHGWYVVENLPPQMLGTLAELVSHAPQSIPRLAVVIDVRSKGLFADIRAALGALAASGVTFRVLFLDASDNVLVRRFEQGRRPHPLQGGGRILDGIAAERELLQELRDSSDVVLDTSGYNVHGLATAITELFSETGPVALRLNVMSFGFKYGLPVDSNYVADVRFIPNPHWVPQLRPHTGLDKDVSDYVLEAEGVKNFVDRYVMALEPVLDGYRRENKHYATIAVGCTGGKHRSVAVAVELSKKLAQYPRVTVTTTHRDLGRE</sequence>
<proteinExistence type="inferred from homology"/>
<accession>B8H7M0</accession>
<protein>
    <recommendedName>
        <fullName evidence="1">Nucleotide-binding protein Achl_1824</fullName>
    </recommendedName>
</protein>
<feature type="chain" id="PRO_0000383213" description="Nucleotide-binding protein Achl_1824">
    <location>
        <begin position="1"/>
        <end position="307"/>
    </location>
</feature>
<feature type="binding site" evidence="1">
    <location>
        <begin position="30"/>
        <end position="37"/>
    </location>
    <ligand>
        <name>ATP</name>
        <dbReference type="ChEBI" id="CHEBI:30616"/>
    </ligand>
</feature>
<feature type="binding site" evidence="1">
    <location>
        <begin position="81"/>
        <end position="84"/>
    </location>
    <ligand>
        <name>GTP</name>
        <dbReference type="ChEBI" id="CHEBI:37565"/>
    </ligand>
</feature>
<keyword id="KW-0067">ATP-binding</keyword>
<keyword id="KW-0342">GTP-binding</keyword>
<keyword id="KW-0547">Nucleotide-binding</keyword>
<name>Y1824_PSECP</name>
<evidence type="ECO:0000255" key="1">
    <source>
        <dbReference type="HAMAP-Rule" id="MF_00636"/>
    </source>
</evidence>
<gene>
    <name type="ordered locus">Achl_1824</name>
</gene>
<comment type="function">
    <text evidence="1">Displays ATPase and GTPase activities.</text>
</comment>
<comment type="similarity">
    <text evidence="1">Belongs to the RapZ-like family.</text>
</comment>